<proteinExistence type="inferred from homology"/>
<comment type="function">
    <text evidence="1">An aminoacyl-tRNA editing enzyme that deacylates mischarged D-aminoacyl-tRNAs. Also deacylates mischarged glycyl-tRNA(Ala), protecting cells against glycine mischarging by AlaRS. Acts via tRNA-based rather than protein-based catalysis; rejects L-amino acids rather than detecting D-amino acids in the active site. By recycling D-aminoacyl-tRNA to D-amino acids and free tRNA molecules, this enzyme counteracts the toxicity associated with the formation of D-aminoacyl-tRNA entities in vivo and helps enforce protein L-homochirality.</text>
</comment>
<comment type="catalytic activity">
    <reaction evidence="1">
        <text>glycyl-tRNA(Ala) + H2O = tRNA(Ala) + glycine + H(+)</text>
        <dbReference type="Rhea" id="RHEA:53744"/>
        <dbReference type="Rhea" id="RHEA-COMP:9657"/>
        <dbReference type="Rhea" id="RHEA-COMP:13640"/>
        <dbReference type="ChEBI" id="CHEBI:15377"/>
        <dbReference type="ChEBI" id="CHEBI:15378"/>
        <dbReference type="ChEBI" id="CHEBI:57305"/>
        <dbReference type="ChEBI" id="CHEBI:78442"/>
        <dbReference type="ChEBI" id="CHEBI:78522"/>
        <dbReference type="EC" id="3.1.1.96"/>
    </reaction>
</comment>
<comment type="catalytic activity">
    <reaction evidence="1">
        <text>a D-aminoacyl-tRNA + H2O = a tRNA + a D-alpha-amino acid + H(+)</text>
        <dbReference type="Rhea" id="RHEA:13953"/>
        <dbReference type="Rhea" id="RHEA-COMP:10123"/>
        <dbReference type="Rhea" id="RHEA-COMP:10124"/>
        <dbReference type="ChEBI" id="CHEBI:15377"/>
        <dbReference type="ChEBI" id="CHEBI:15378"/>
        <dbReference type="ChEBI" id="CHEBI:59871"/>
        <dbReference type="ChEBI" id="CHEBI:78442"/>
        <dbReference type="ChEBI" id="CHEBI:79333"/>
        <dbReference type="EC" id="3.1.1.96"/>
    </reaction>
</comment>
<comment type="subunit">
    <text evidence="1">Homodimer.</text>
</comment>
<comment type="subcellular location">
    <subcellularLocation>
        <location evidence="1">Cytoplasm</location>
    </subcellularLocation>
</comment>
<comment type="domain">
    <text evidence="1">A Gly-cisPro motif from one monomer fits into the active site of the other monomer to allow specific chiral rejection of L-amino acids.</text>
</comment>
<comment type="similarity">
    <text evidence="1">Belongs to the DTD family.</text>
</comment>
<keyword id="KW-0963">Cytoplasm</keyword>
<keyword id="KW-0378">Hydrolase</keyword>
<keyword id="KW-0694">RNA-binding</keyword>
<keyword id="KW-0820">tRNA-binding</keyword>
<accession>A7GT88</accession>
<organism>
    <name type="scientific">Bacillus cytotoxicus (strain DSM 22905 / CIP 110041 / 391-98 / NVH 391-98)</name>
    <dbReference type="NCBI Taxonomy" id="315749"/>
    <lineage>
        <taxon>Bacteria</taxon>
        <taxon>Bacillati</taxon>
        <taxon>Bacillota</taxon>
        <taxon>Bacilli</taxon>
        <taxon>Bacillales</taxon>
        <taxon>Bacillaceae</taxon>
        <taxon>Bacillus</taxon>
        <taxon>Bacillus cereus group</taxon>
    </lineage>
</organism>
<evidence type="ECO:0000255" key="1">
    <source>
        <dbReference type="HAMAP-Rule" id="MF_00518"/>
    </source>
</evidence>
<gene>
    <name evidence="1" type="primary">dtd</name>
    <name type="ordered locus">Bcer98_3122</name>
</gene>
<name>DTD_BACCN</name>
<dbReference type="EC" id="3.1.1.96" evidence="1"/>
<dbReference type="EMBL" id="CP000764">
    <property type="protein sequence ID" value="ABS23346.1"/>
    <property type="molecule type" value="Genomic_DNA"/>
</dbReference>
<dbReference type="RefSeq" id="WP_012095583.1">
    <property type="nucleotide sequence ID" value="NC_009674.1"/>
</dbReference>
<dbReference type="SMR" id="A7GT88"/>
<dbReference type="STRING" id="315749.Bcer98_3122"/>
<dbReference type="GeneID" id="33898370"/>
<dbReference type="KEGG" id="bcy:Bcer98_3122"/>
<dbReference type="eggNOG" id="COG1490">
    <property type="taxonomic scope" value="Bacteria"/>
</dbReference>
<dbReference type="HOGENOM" id="CLU_076901_1_0_9"/>
<dbReference type="OrthoDB" id="9801395at2"/>
<dbReference type="Proteomes" id="UP000002300">
    <property type="component" value="Chromosome"/>
</dbReference>
<dbReference type="GO" id="GO:0005737">
    <property type="term" value="C:cytoplasm"/>
    <property type="evidence" value="ECO:0007669"/>
    <property type="project" value="UniProtKB-SubCell"/>
</dbReference>
<dbReference type="GO" id="GO:0051500">
    <property type="term" value="F:D-tyrosyl-tRNA(Tyr) deacylase activity"/>
    <property type="evidence" value="ECO:0007669"/>
    <property type="project" value="TreeGrafter"/>
</dbReference>
<dbReference type="GO" id="GO:0106026">
    <property type="term" value="F:Gly-tRNA(Ala) deacylase activity"/>
    <property type="evidence" value="ECO:0007669"/>
    <property type="project" value="UniProtKB-UniRule"/>
</dbReference>
<dbReference type="GO" id="GO:0043908">
    <property type="term" value="F:Ser(Gly)-tRNA(Ala) hydrolase activity"/>
    <property type="evidence" value="ECO:0007669"/>
    <property type="project" value="UniProtKB-UniRule"/>
</dbReference>
<dbReference type="GO" id="GO:0000049">
    <property type="term" value="F:tRNA binding"/>
    <property type="evidence" value="ECO:0007669"/>
    <property type="project" value="UniProtKB-UniRule"/>
</dbReference>
<dbReference type="GO" id="GO:0019478">
    <property type="term" value="P:D-amino acid catabolic process"/>
    <property type="evidence" value="ECO:0007669"/>
    <property type="project" value="UniProtKB-UniRule"/>
</dbReference>
<dbReference type="CDD" id="cd00563">
    <property type="entry name" value="Dtyr_deacylase"/>
    <property type="match status" value="1"/>
</dbReference>
<dbReference type="FunFam" id="3.50.80.10:FF:000001">
    <property type="entry name" value="D-aminoacyl-tRNA deacylase"/>
    <property type="match status" value="1"/>
</dbReference>
<dbReference type="Gene3D" id="3.50.80.10">
    <property type="entry name" value="D-tyrosyl-tRNA(Tyr) deacylase"/>
    <property type="match status" value="1"/>
</dbReference>
<dbReference type="HAMAP" id="MF_00518">
    <property type="entry name" value="Deacylase_Dtd"/>
    <property type="match status" value="1"/>
</dbReference>
<dbReference type="InterPro" id="IPR003732">
    <property type="entry name" value="Daa-tRNA_deacyls_DTD"/>
</dbReference>
<dbReference type="InterPro" id="IPR023509">
    <property type="entry name" value="DTD-like_sf"/>
</dbReference>
<dbReference type="NCBIfam" id="TIGR00256">
    <property type="entry name" value="D-aminoacyl-tRNA deacylase"/>
    <property type="match status" value="1"/>
</dbReference>
<dbReference type="PANTHER" id="PTHR10472:SF5">
    <property type="entry name" value="D-AMINOACYL-TRNA DEACYLASE 1"/>
    <property type="match status" value="1"/>
</dbReference>
<dbReference type="PANTHER" id="PTHR10472">
    <property type="entry name" value="D-TYROSYL-TRNA TYR DEACYLASE"/>
    <property type="match status" value="1"/>
</dbReference>
<dbReference type="Pfam" id="PF02580">
    <property type="entry name" value="Tyr_Deacylase"/>
    <property type="match status" value="1"/>
</dbReference>
<dbReference type="SUPFAM" id="SSF69500">
    <property type="entry name" value="DTD-like"/>
    <property type="match status" value="1"/>
</dbReference>
<feature type="chain" id="PRO_1000081644" description="D-aminoacyl-tRNA deacylase">
    <location>
        <begin position="1"/>
        <end position="146"/>
    </location>
</feature>
<feature type="short sequence motif" description="Gly-cisPro motif, important for rejection of L-amino acids" evidence="1">
    <location>
        <begin position="137"/>
        <end position="138"/>
    </location>
</feature>
<reference key="1">
    <citation type="journal article" date="2008" name="Chem. Biol. Interact.">
        <title>Extending the Bacillus cereus group genomics to putative food-borne pathogens of different toxicity.</title>
        <authorList>
            <person name="Lapidus A."/>
            <person name="Goltsman E."/>
            <person name="Auger S."/>
            <person name="Galleron N."/>
            <person name="Segurens B."/>
            <person name="Dossat C."/>
            <person name="Land M.L."/>
            <person name="Broussolle V."/>
            <person name="Brillard J."/>
            <person name="Guinebretiere M.-H."/>
            <person name="Sanchis V."/>
            <person name="Nguen-the C."/>
            <person name="Lereclus D."/>
            <person name="Richardson P."/>
            <person name="Wincker P."/>
            <person name="Weissenbach J."/>
            <person name="Ehrlich S.D."/>
            <person name="Sorokin A."/>
        </authorList>
    </citation>
    <scope>NUCLEOTIDE SEQUENCE [LARGE SCALE GENOMIC DNA]</scope>
    <source>
        <strain>DSM 22905 / CIP 110041 / 391-98 / NVH 391-98</strain>
    </source>
</reference>
<sequence length="146" mass="16351">MRVVLQRSKEASVTVDGEIVGQIPFGLTLLVGITHEDTEQDAAYIAEKIANLRIFEDENGKMNHSILDVKGQVLSISQFTLYGDCRKGRRPNFMNAAKPDYAERLYDFFNEEIRKQGLHVETGKFGAMMDVSLVNDGPVTLIVESK</sequence>
<protein>
    <recommendedName>
        <fullName evidence="1">D-aminoacyl-tRNA deacylase</fullName>
        <shortName evidence="1">DTD</shortName>
        <ecNumber evidence="1">3.1.1.96</ecNumber>
    </recommendedName>
    <alternativeName>
        <fullName evidence="1">Gly-tRNA(Ala) deacylase</fullName>
    </alternativeName>
</protein>